<comment type="function">
    <text evidence="4">Odorant receptor.</text>
</comment>
<comment type="subcellular location">
    <subcellularLocation>
        <location>Cell membrane</location>
        <topology>Multi-pass membrane protein</topology>
    </subcellularLocation>
</comment>
<comment type="similarity">
    <text evidence="2">Belongs to the G-protein coupled receptor 1 family.</text>
</comment>
<comment type="online information" name="Human Olfactory Receptor Data Exploratorium (HORDE)">
    <link uri="http://genome.weizmann.ac.il/horde/card/index/symbol:OR8J3"/>
</comment>
<accession>Q8NGG0</accession>
<accession>Q6IFB6</accession>
<accession>Q96RC2</accession>
<proteinExistence type="inferred from homology"/>
<dbReference type="EMBL" id="AB065841">
    <property type="protein sequence ID" value="BAC06060.1"/>
    <property type="molecule type" value="Genomic_DNA"/>
</dbReference>
<dbReference type="EMBL" id="AF399516">
    <property type="protein sequence ID" value="AAK95001.1"/>
    <property type="molecule type" value="Genomic_DNA"/>
</dbReference>
<dbReference type="EMBL" id="BK004346">
    <property type="protein sequence ID" value="DAA04744.1"/>
    <property type="molecule type" value="Genomic_DNA"/>
</dbReference>
<dbReference type="CCDS" id="CCDS31520.1"/>
<dbReference type="RefSeq" id="NP_001004064.1">
    <property type="nucleotide sequence ID" value="NM_001004064.2"/>
</dbReference>
<dbReference type="SMR" id="Q8NGG0"/>
<dbReference type="FunCoup" id="Q8NGG0">
    <property type="interactions" value="416"/>
</dbReference>
<dbReference type="STRING" id="9606.ENSP00000493166"/>
<dbReference type="GlyCosmos" id="Q8NGG0">
    <property type="glycosylation" value="2 sites, No reported glycans"/>
</dbReference>
<dbReference type="GlyGen" id="Q8NGG0">
    <property type="glycosylation" value="2 sites"/>
</dbReference>
<dbReference type="iPTMnet" id="Q8NGG0"/>
<dbReference type="PhosphoSitePlus" id="Q8NGG0"/>
<dbReference type="BioMuta" id="OR8J3"/>
<dbReference type="DMDM" id="38372684"/>
<dbReference type="MassIVE" id="Q8NGG0"/>
<dbReference type="PaxDb" id="9606-ENSP00000301529"/>
<dbReference type="ProteomicsDB" id="73502"/>
<dbReference type="Antibodypedia" id="58960">
    <property type="antibodies" value="92 antibodies from 19 providers"/>
</dbReference>
<dbReference type="DNASU" id="81168"/>
<dbReference type="Ensembl" id="ENST00000641913.1">
    <property type="protein sequence ID" value="ENSP00000493417.1"/>
    <property type="gene ID" value="ENSG00000167822.3"/>
</dbReference>
<dbReference type="Ensembl" id="ENST00000642058.1">
    <property type="protein sequence ID" value="ENSP00000493166.1"/>
    <property type="gene ID" value="ENSG00000167822.3"/>
</dbReference>
<dbReference type="GeneID" id="81168"/>
<dbReference type="KEGG" id="hsa:81168"/>
<dbReference type="MANE-Select" id="ENST00000642058.1">
    <property type="protein sequence ID" value="ENSP00000493166.1"/>
    <property type="RefSeq nucleotide sequence ID" value="NM_001004064.2"/>
    <property type="RefSeq protein sequence ID" value="NP_001004064.1"/>
</dbReference>
<dbReference type="UCSC" id="uc010riz.2">
    <property type="organism name" value="human"/>
</dbReference>
<dbReference type="AGR" id="HGNC:15312"/>
<dbReference type="CTD" id="81168"/>
<dbReference type="GeneCards" id="OR8J3"/>
<dbReference type="HGNC" id="HGNC:15312">
    <property type="gene designation" value="OR8J3"/>
</dbReference>
<dbReference type="HPA" id="ENSG00000167822">
    <property type="expression patterns" value="Not detected"/>
</dbReference>
<dbReference type="neXtProt" id="NX_Q8NGG0"/>
<dbReference type="PharmGKB" id="PA32774"/>
<dbReference type="VEuPathDB" id="HostDB:ENSG00000167822"/>
<dbReference type="eggNOG" id="ENOG502SMQ4">
    <property type="taxonomic scope" value="Eukaryota"/>
</dbReference>
<dbReference type="GeneTree" id="ENSGT00950000182718"/>
<dbReference type="HOGENOM" id="CLU_012526_5_5_1"/>
<dbReference type="InParanoid" id="Q8NGG0"/>
<dbReference type="OMA" id="VSYCIFS"/>
<dbReference type="OrthoDB" id="9011197at2759"/>
<dbReference type="PAN-GO" id="Q8NGG0">
    <property type="GO annotations" value="4 GO annotations based on evolutionary models"/>
</dbReference>
<dbReference type="PhylomeDB" id="Q8NGG0"/>
<dbReference type="TreeFam" id="TF352753"/>
<dbReference type="PathwayCommons" id="Q8NGG0"/>
<dbReference type="Reactome" id="R-HSA-9752946">
    <property type="pathway name" value="Expression and translocation of olfactory receptors"/>
</dbReference>
<dbReference type="BioGRID-ORCS" id="81168">
    <property type="hits" value="13 hits in 742 CRISPR screens"/>
</dbReference>
<dbReference type="GeneWiki" id="OR8J3"/>
<dbReference type="GenomeRNAi" id="81168"/>
<dbReference type="Pharos" id="Q8NGG0">
    <property type="development level" value="Tdark"/>
</dbReference>
<dbReference type="PRO" id="PR:Q8NGG0"/>
<dbReference type="Proteomes" id="UP000005640">
    <property type="component" value="Chromosome 11"/>
</dbReference>
<dbReference type="RNAct" id="Q8NGG0">
    <property type="molecule type" value="protein"/>
</dbReference>
<dbReference type="ExpressionAtlas" id="Q8NGG0">
    <property type="expression patterns" value="baseline and differential"/>
</dbReference>
<dbReference type="GO" id="GO:0005886">
    <property type="term" value="C:plasma membrane"/>
    <property type="evidence" value="ECO:0007669"/>
    <property type="project" value="UniProtKB-SubCell"/>
</dbReference>
<dbReference type="GO" id="GO:0004930">
    <property type="term" value="F:G protein-coupled receptor activity"/>
    <property type="evidence" value="ECO:0007669"/>
    <property type="project" value="UniProtKB-KW"/>
</dbReference>
<dbReference type="GO" id="GO:0004984">
    <property type="term" value="F:olfactory receptor activity"/>
    <property type="evidence" value="ECO:0007669"/>
    <property type="project" value="InterPro"/>
</dbReference>
<dbReference type="CDD" id="cd15413">
    <property type="entry name" value="7tmA_OR8K-like"/>
    <property type="match status" value="1"/>
</dbReference>
<dbReference type="FunFam" id="1.10.1220.70:FF:000001">
    <property type="entry name" value="Olfactory receptor"/>
    <property type="match status" value="1"/>
</dbReference>
<dbReference type="FunFam" id="1.20.1070.10:FF:000003">
    <property type="entry name" value="Olfactory receptor"/>
    <property type="match status" value="1"/>
</dbReference>
<dbReference type="Gene3D" id="1.20.1070.10">
    <property type="entry name" value="Rhodopsin 7-helix transmembrane proteins"/>
    <property type="match status" value="1"/>
</dbReference>
<dbReference type="InterPro" id="IPR000276">
    <property type="entry name" value="GPCR_Rhodpsn"/>
</dbReference>
<dbReference type="InterPro" id="IPR017452">
    <property type="entry name" value="GPCR_Rhodpsn_7TM"/>
</dbReference>
<dbReference type="InterPro" id="IPR000725">
    <property type="entry name" value="Olfact_rcpt"/>
</dbReference>
<dbReference type="PANTHER" id="PTHR48018">
    <property type="entry name" value="OLFACTORY RECEPTOR"/>
    <property type="match status" value="1"/>
</dbReference>
<dbReference type="Pfam" id="PF13853">
    <property type="entry name" value="7tm_4"/>
    <property type="match status" value="1"/>
</dbReference>
<dbReference type="PRINTS" id="PR00237">
    <property type="entry name" value="GPCRRHODOPSN"/>
</dbReference>
<dbReference type="PRINTS" id="PR00245">
    <property type="entry name" value="OLFACTORYR"/>
</dbReference>
<dbReference type="SUPFAM" id="SSF81321">
    <property type="entry name" value="Family A G protein-coupled receptor-like"/>
    <property type="match status" value="1"/>
</dbReference>
<dbReference type="PROSITE" id="PS00237">
    <property type="entry name" value="G_PROTEIN_RECEP_F1_1"/>
    <property type="match status" value="1"/>
</dbReference>
<dbReference type="PROSITE" id="PS50262">
    <property type="entry name" value="G_PROTEIN_RECEP_F1_2"/>
    <property type="match status" value="1"/>
</dbReference>
<organism>
    <name type="scientific">Homo sapiens</name>
    <name type="common">Human</name>
    <dbReference type="NCBI Taxonomy" id="9606"/>
    <lineage>
        <taxon>Eukaryota</taxon>
        <taxon>Metazoa</taxon>
        <taxon>Chordata</taxon>
        <taxon>Craniata</taxon>
        <taxon>Vertebrata</taxon>
        <taxon>Euteleostomi</taxon>
        <taxon>Mammalia</taxon>
        <taxon>Eutheria</taxon>
        <taxon>Euarchontoglires</taxon>
        <taxon>Primates</taxon>
        <taxon>Haplorrhini</taxon>
        <taxon>Catarrhini</taxon>
        <taxon>Hominidae</taxon>
        <taxon>Homo</taxon>
    </lineage>
</organism>
<name>OR8J3_HUMAN</name>
<sequence length="315" mass="35481">MAPENFTRVTEFILTGVSSCPELQIPLFLVFLVLYVLTMAGNLGIITLTSVDSRLQNPMYFFLRHLAIINLGNSTVIAPKMLMNFLVKKKTTSFYECATQLGGFLFFIVSEVMMLAVMAYDRYVAICNPLLYMVVVSRRLCLLLVSLTYLYGFSTAIVVSPCIFSVSYCSSNIINHFYCDIAPLLALSCSDTYIPETIVFISAATNLVFSMITVLVSYFNIVLSILRIRSPEGRKKAFSTCASHMIAVTVFYGTMLFMYLQPQTNHSLDTDKMASVFYTLVIPMLNPLIYSLRNNDVNVALKKFMENPCYSFKSM</sequence>
<feature type="chain" id="PRO_0000150670" description="Olfactory receptor 8J3">
    <location>
        <begin position="1"/>
        <end position="315"/>
    </location>
</feature>
<feature type="topological domain" description="Extracellular" evidence="1">
    <location>
        <begin position="1"/>
        <end position="25"/>
    </location>
</feature>
<feature type="transmembrane region" description="Helical; Name=1" evidence="1">
    <location>
        <begin position="26"/>
        <end position="46"/>
    </location>
</feature>
<feature type="topological domain" description="Cytoplasmic" evidence="1">
    <location>
        <begin position="47"/>
        <end position="54"/>
    </location>
</feature>
<feature type="transmembrane region" description="Helical; Name=2" evidence="1">
    <location>
        <begin position="55"/>
        <end position="75"/>
    </location>
</feature>
<feature type="topological domain" description="Extracellular" evidence="1">
    <location>
        <begin position="76"/>
        <end position="99"/>
    </location>
</feature>
<feature type="transmembrane region" description="Helical; Name=3" evidence="1">
    <location>
        <begin position="100"/>
        <end position="120"/>
    </location>
</feature>
<feature type="topological domain" description="Cytoplasmic" evidence="1">
    <location>
        <begin position="121"/>
        <end position="139"/>
    </location>
</feature>
<feature type="transmembrane region" description="Helical; Name=4" evidence="1">
    <location>
        <begin position="140"/>
        <end position="160"/>
    </location>
</feature>
<feature type="topological domain" description="Extracellular" evidence="1">
    <location>
        <begin position="161"/>
        <end position="197"/>
    </location>
</feature>
<feature type="transmembrane region" description="Helical; Name=5" evidence="1">
    <location>
        <begin position="198"/>
        <end position="217"/>
    </location>
</feature>
<feature type="topological domain" description="Cytoplasmic" evidence="1">
    <location>
        <begin position="218"/>
        <end position="237"/>
    </location>
</feature>
<feature type="transmembrane region" description="Helical; Name=6" evidence="1">
    <location>
        <begin position="238"/>
        <end position="258"/>
    </location>
</feature>
<feature type="topological domain" description="Extracellular" evidence="1">
    <location>
        <begin position="259"/>
        <end position="271"/>
    </location>
</feature>
<feature type="transmembrane region" description="Helical; Name=7" evidence="1">
    <location>
        <begin position="272"/>
        <end position="292"/>
    </location>
</feature>
<feature type="topological domain" description="Cytoplasmic" evidence="1">
    <location>
        <begin position="293"/>
        <end position="315"/>
    </location>
</feature>
<feature type="glycosylation site" description="N-linked (GlcNAc...) asparagine" evidence="1">
    <location>
        <position position="5"/>
    </location>
</feature>
<feature type="glycosylation site" description="N-linked (GlcNAc...) asparagine" evidence="1">
    <location>
        <position position="265"/>
    </location>
</feature>
<feature type="disulfide bond" evidence="2">
    <location>
        <begin position="97"/>
        <end position="189"/>
    </location>
</feature>
<feature type="sequence variant" id="VAR_048052" description="In dbSNP:rs1947924.">
    <original>N</original>
    <variation>T</variation>
    <location>
        <position position="57"/>
    </location>
</feature>
<feature type="sequence variant" id="VAR_048053" description="In dbSNP:rs7937461.">
    <original>V</original>
    <variation>I</variation>
    <location>
        <position position="87"/>
    </location>
</feature>
<feature type="sequence variant" id="VAR_048054" description="In dbSNP:rs1384094." evidence="3">
    <original>V</original>
    <variation>F</variation>
    <location>
        <position position="208"/>
    </location>
</feature>
<feature type="sequence variant" id="VAR_048055" description="In dbSNP:rs17150102.">
    <original>D</original>
    <variation>E</variation>
    <location>
        <position position="271"/>
    </location>
</feature>
<gene>
    <name type="primary">OR8J3</name>
</gene>
<reference key="1">
    <citation type="submission" date="2001-07" db="EMBL/GenBank/DDBJ databases">
        <title>Genome-wide discovery and analysis of human seven transmembrane helix receptor genes.</title>
        <authorList>
            <person name="Suwa M."/>
            <person name="Sato T."/>
            <person name="Okouchi I."/>
            <person name="Arita M."/>
            <person name="Futami K."/>
            <person name="Matsumoto S."/>
            <person name="Tsutsumi S."/>
            <person name="Aburatani H."/>
            <person name="Asai K."/>
            <person name="Akiyama Y."/>
        </authorList>
    </citation>
    <scope>NUCLEOTIDE SEQUENCE [GENOMIC DNA]</scope>
</reference>
<reference key="2">
    <citation type="journal article" date="2002" name="Genomics">
        <title>DEFOG: a practical scheme for deciphering families of genes.</title>
        <authorList>
            <person name="Fuchs T."/>
            <person name="Malecova B."/>
            <person name="Linhart C."/>
            <person name="Sharan R."/>
            <person name="Khen M."/>
            <person name="Herwig R."/>
            <person name="Shmulevich D."/>
            <person name="Elkon R."/>
            <person name="Steinfath M."/>
            <person name="O'Brien J.K."/>
            <person name="Radelof U."/>
            <person name="Lehrach H."/>
            <person name="Lancet D."/>
            <person name="Shamir R."/>
        </authorList>
    </citation>
    <scope>NUCLEOTIDE SEQUENCE [GENOMIC DNA] OF 68-283</scope>
    <scope>VARIANT PHE-208</scope>
</reference>
<reference key="3">
    <citation type="journal article" date="2004" name="Proc. Natl. Acad. Sci. U.S.A.">
        <title>The human olfactory receptor gene family.</title>
        <authorList>
            <person name="Malnic B."/>
            <person name="Godfrey P.A."/>
            <person name="Buck L.B."/>
        </authorList>
    </citation>
    <scope>IDENTIFICATION</scope>
</reference>
<reference key="4">
    <citation type="journal article" date="2004" name="Proc. Natl. Acad. Sci. U.S.A.">
        <authorList>
            <person name="Malnic B."/>
            <person name="Godfrey P.A."/>
            <person name="Buck L.B."/>
        </authorList>
    </citation>
    <scope>ERRATUM OF PUBMED:14983052</scope>
</reference>
<evidence type="ECO:0000255" key="1"/>
<evidence type="ECO:0000255" key="2">
    <source>
        <dbReference type="PROSITE-ProRule" id="PRU00521"/>
    </source>
</evidence>
<evidence type="ECO:0000269" key="3">
    <source>
    </source>
</evidence>
<evidence type="ECO:0000305" key="4"/>
<protein>
    <recommendedName>
        <fullName>Olfactory receptor 8J3</fullName>
    </recommendedName>
    <alternativeName>
        <fullName>Olfactory receptor OR11-173</fullName>
    </alternativeName>
</protein>
<keyword id="KW-1003">Cell membrane</keyword>
<keyword id="KW-1015">Disulfide bond</keyword>
<keyword id="KW-0297">G-protein coupled receptor</keyword>
<keyword id="KW-0325">Glycoprotein</keyword>
<keyword id="KW-0472">Membrane</keyword>
<keyword id="KW-0552">Olfaction</keyword>
<keyword id="KW-0675">Receptor</keyword>
<keyword id="KW-1185">Reference proteome</keyword>
<keyword id="KW-0716">Sensory transduction</keyword>
<keyword id="KW-0807">Transducer</keyword>
<keyword id="KW-0812">Transmembrane</keyword>
<keyword id="KW-1133">Transmembrane helix</keyword>